<comment type="catalytic activity">
    <reaction evidence="1">
        <text>D-erythro-1-(imidazol-4-yl)glycerol 3-phosphate = 3-(imidazol-4-yl)-2-oxopropyl phosphate + H2O</text>
        <dbReference type="Rhea" id="RHEA:11040"/>
        <dbReference type="ChEBI" id="CHEBI:15377"/>
        <dbReference type="ChEBI" id="CHEBI:57766"/>
        <dbReference type="ChEBI" id="CHEBI:58278"/>
        <dbReference type="EC" id="4.2.1.19"/>
    </reaction>
</comment>
<comment type="pathway">
    <text evidence="1">Amino-acid biosynthesis; L-histidine biosynthesis; L-histidine from 5-phospho-alpha-D-ribose 1-diphosphate: step 6/9.</text>
</comment>
<comment type="subcellular location">
    <subcellularLocation>
        <location evidence="1">Cytoplasm</location>
    </subcellularLocation>
</comment>
<comment type="similarity">
    <text evidence="1">Belongs to the imidazoleglycerol-phosphate dehydratase family.</text>
</comment>
<gene>
    <name evidence="1" type="primary">hisB</name>
    <name type="ordered locus">Mpal_1747</name>
</gene>
<keyword id="KW-0028">Amino-acid biosynthesis</keyword>
<keyword id="KW-0963">Cytoplasm</keyword>
<keyword id="KW-0368">Histidine biosynthesis</keyword>
<keyword id="KW-0456">Lyase</keyword>
<keyword id="KW-1185">Reference proteome</keyword>
<protein>
    <recommendedName>
        <fullName evidence="1">Imidazoleglycerol-phosphate dehydratase</fullName>
        <shortName evidence="1">IGPD</shortName>
        <ecNumber evidence="1">4.2.1.19</ecNumber>
    </recommendedName>
</protein>
<accession>B8GJY3</accession>
<sequence length="195" mass="21111">MRESIVERRTSETDIVLKIGLDRTEPHQITISTGIPFFDHMVQAMSRHGGFDLNITAKGDLEVDSHHTIEDIGIVLGTALQQALGDGRGIKRFGYAIIPMDEALAEAVLDCGGRGYLVFKGTFGNSTVGGIDTSLFEHFFYSLCIHAGITAHIRFSGQNDHHTAEAIFKAFGIALGQAVTIIPESNQIPSTKGTL</sequence>
<proteinExistence type="inferred from homology"/>
<feature type="chain" id="PRO_1000190628" description="Imidazoleglycerol-phosphate dehydratase">
    <location>
        <begin position="1"/>
        <end position="195"/>
    </location>
</feature>
<evidence type="ECO:0000255" key="1">
    <source>
        <dbReference type="HAMAP-Rule" id="MF_00076"/>
    </source>
</evidence>
<organism>
    <name type="scientific">Methanosphaerula palustris (strain ATCC BAA-1556 / DSM 19958 / E1-9c)</name>
    <dbReference type="NCBI Taxonomy" id="521011"/>
    <lineage>
        <taxon>Archaea</taxon>
        <taxon>Methanobacteriati</taxon>
        <taxon>Methanobacteriota</taxon>
        <taxon>Stenosarchaea group</taxon>
        <taxon>Methanomicrobia</taxon>
        <taxon>Methanomicrobiales</taxon>
        <taxon>Methanoregulaceae</taxon>
        <taxon>Methanosphaerula</taxon>
    </lineage>
</organism>
<reference key="1">
    <citation type="journal article" date="2015" name="Genome Announc.">
        <title>Complete Genome Sequence of Methanosphaerula palustris E1-9CT, a Hydrogenotrophic Methanogen Isolated from a Minerotrophic Fen Peatland.</title>
        <authorList>
            <person name="Cadillo-Quiroz H."/>
            <person name="Browne P."/>
            <person name="Kyrpides N."/>
            <person name="Woyke T."/>
            <person name="Goodwin L."/>
            <person name="Detter C."/>
            <person name="Yavitt J.B."/>
            <person name="Zinder S.H."/>
        </authorList>
    </citation>
    <scope>NUCLEOTIDE SEQUENCE [LARGE SCALE GENOMIC DNA]</scope>
    <source>
        <strain>ATCC BAA-1556 / DSM 19958 / E1-9c</strain>
    </source>
</reference>
<dbReference type="EC" id="4.2.1.19" evidence="1"/>
<dbReference type="EMBL" id="CP001338">
    <property type="protein sequence ID" value="ACL17054.1"/>
    <property type="molecule type" value="Genomic_DNA"/>
</dbReference>
<dbReference type="RefSeq" id="WP_012618373.1">
    <property type="nucleotide sequence ID" value="NC_011832.1"/>
</dbReference>
<dbReference type="SMR" id="B8GJY3"/>
<dbReference type="STRING" id="521011.Mpal_1747"/>
<dbReference type="GeneID" id="7271206"/>
<dbReference type="KEGG" id="mpl:Mpal_1747"/>
<dbReference type="eggNOG" id="arCOG04398">
    <property type="taxonomic scope" value="Archaea"/>
</dbReference>
<dbReference type="HOGENOM" id="CLU_044308_2_0_2"/>
<dbReference type="OrthoDB" id="103579at2157"/>
<dbReference type="UniPathway" id="UPA00031">
    <property type="reaction ID" value="UER00011"/>
</dbReference>
<dbReference type="Proteomes" id="UP000002457">
    <property type="component" value="Chromosome"/>
</dbReference>
<dbReference type="GO" id="GO:0005737">
    <property type="term" value="C:cytoplasm"/>
    <property type="evidence" value="ECO:0007669"/>
    <property type="project" value="UniProtKB-SubCell"/>
</dbReference>
<dbReference type="GO" id="GO:0004424">
    <property type="term" value="F:imidazoleglycerol-phosphate dehydratase activity"/>
    <property type="evidence" value="ECO:0007669"/>
    <property type="project" value="UniProtKB-UniRule"/>
</dbReference>
<dbReference type="GO" id="GO:0000105">
    <property type="term" value="P:L-histidine biosynthetic process"/>
    <property type="evidence" value="ECO:0007669"/>
    <property type="project" value="UniProtKB-UniRule"/>
</dbReference>
<dbReference type="CDD" id="cd07914">
    <property type="entry name" value="IGPD"/>
    <property type="match status" value="1"/>
</dbReference>
<dbReference type="FunFam" id="3.30.230.40:FF:000001">
    <property type="entry name" value="Imidazoleglycerol-phosphate dehydratase HisB"/>
    <property type="match status" value="1"/>
</dbReference>
<dbReference type="FunFam" id="3.30.230.40:FF:000003">
    <property type="entry name" value="Imidazoleglycerol-phosphate dehydratase HisB"/>
    <property type="match status" value="1"/>
</dbReference>
<dbReference type="Gene3D" id="3.30.230.40">
    <property type="entry name" value="Imidazole glycerol phosphate dehydratase, domain 1"/>
    <property type="match status" value="2"/>
</dbReference>
<dbReference type="HAMAP" id="MF_00076">
    <property type="entry name" value="HisB"/>
    <property type="match status" value="1"/>
</dbReference>
<dbReference type="InterPro" id="IPR038494">
    <property type="entry name" value="IGPD_sf"/>
</dbReference>
<dbReference type="InterPro" id="IPR000807">
    <property type="entry name" value="ImidazoleglycerolP_deHydtase"/>
</dbReference>
<dbReference type="InterPro" id="IPR020565">
    <property type="entry name" value="ImidazoleglycerP_deHydtase_CS"/>
</dbReference>
<dbReference type="InterPro" id="IPR020568">
    <property type="entry name" value="Ribosomal_Su5_D2-typ_SF"/>
</dbReference>
<dbReference type="NCBIfam" id="NF002111">
    <property type="entry name" value="PRK00951.2-1"/>
    <property type="match status" value="1"/>
</dbReference>
<dbReference type="NCBIfam" id="NF002114">
    <property type="entry name" value="PRK00951.2-4"/>
    <property type="match status" value="1"/>
</dbReference>
<dbReference type="PANTHER" id="PTHR23133:SF2">
    <property type="entry name" value="IMIDAZOLEGLYCEROL-PHOSPHATE DEHYDRATASE"/>
    <property type="match status" value="1"/>
</dbReference>
<dbReference type="PANTHER" id="PTHR23133">
    <property type="entry name" value="IMIDAZOLEGLYCEROL-PHOSPHATE DEHYDRATASE HIS7"/>
    <property type="match status" value="1"/>
</dbReference>
<dbReference type="Pfam" id="PF00475">
    <property type="entry name" value="IGPD"/>
    <property type="match status" value="1"/>
</dbReference>
<dbReference type="SUPFAM" id="SSF54211">
    <property type="entry name" value="Ribosomal protein S5 domain 2-like"/>
    <property type="match status" value="2"/>
</dbReference>
<dbReference type="PROSITE" id="PS00954">
    <property type="entry name" value="IGP_DEHYDRATASE_1"/>
    <property type="match status" value="1"/>
</dbReference>
<dbReference type="PROSITE" id="PS00955">
    <property type="entry name" value="IGP_DEHYDRATASE_2"/>
    <property type="match status" value="1"/>
</dbReference>
<name>HIS7_METPE</name>